<accession>Q3J0R9</accession>
<keyword id="KW-0001">2Fe-2S</keyword>
<keyword id="KW-0010">Activator</keyword>
<keyword id="KW-0238">DNA-binding</keyword>
<keyword id="KW-0408">Iron</keyword>
<keyword id="KW-0411">Iron-sulfur</keyword>
<keyword id="KW-0479">Metal-binding</keyword>
<keyword id="KW-1185">Reference proteome</keyword>
<keyword id="KW-0678">Repressor</keyword>
<keyword id="KW-0804">Transcription</keyword>
<keyword id="KW-0805">Transcription regulation</keyword>
<comment type="function">
    <text evidence="1 4">Regulates the transcription of several operons and genes involved in the biogenesis of Fe-S clusters and Fe-S-containing proteins (By similarity). Functions as a transcriptional repressor of genes involved in iron metabolism by directly binding to the promoter region of genes preceded by the Iron-Rhodo-box motif (PubMed:26235649). Binds to iscR and hemP promoter regions independently of an Fe-S cluster, but their transcriptional repression is Fe-S cluster-dependent (PubMed:26235649). Seems to activate some target genes in a Fe-S cluster-independent manner (PubMed:26235649). Negatively regulates its own transcription in the presence of iron only (PubMed:26235649).</text>
</comment>
<comment type="cofactor">
    <cofactor evidence="4">
        <name>[2Fe-2S] cluster</name>
        <dbReference type="ChEBI" id="CHEBI:190135"/>
    </cofactor>
    <text evidence="2">Binds 1 [2Fe-2S] cluster.</text>
</comment>
<comment type="disruption phenotype">
    <text evidence="4">Normal growth under iron-replete conditions, but impaired growth under iron limitation (PubMed:26235649). Exhibits significantly increased ROS levels in iron-replete and iron-deplete conditions (PubMed:26235649). Differential gene expression of genes involved in iron homeostasis as well as genes preceded by an Iron-Rhodo-box motif (PubMed:26235649). Higher expression levels for genes with predicted functions in ferric/ferrous iron uptake or iron storage (PubMed:26235649). Lower expression levels for genes encoding proteins involved in adaptation to cold stress, oxidative stress, glycolysis, pyruvate decarboxylation, flagellum biosynthesis and chemotaxis (PubMed:26235649). Abolished expression of gene iscS downstream in the operon (PubMed:26235649). Induction of iscR expression in the presence of iron (PubMed:26235649). Under iron-limiting conditions, shows defect in iscR repression (PubMed:26235649).</text>
</comment>
<comment type="miscellaneous">
    <text evidence="5">IscR proteins typically ligate an Fe-S cluster in their C-terminal part by using three Cys residues and one histidine residue. This motif is conserved in many proteobacteria, but only a single Cys residue involved in Fe-S coordination is present in the C-terminal part of Rhodobacteraceae IscR at a position not matching the Fe-S coordinating Cys residues of other IscR proteins.</text>
</comment>
<gene>
    <name evidence="5" type="primary">iscR</name>
    <name evidence="6" type="ordered locus">RHOS4_20470</name>
    <name evidence="7" type="ORF">RSP_0443</name>
</gene>
<name>ISCR_CERS4</name>
<feature type="chain" id="PRO_0000458926" description="HTH-type transcriptional regulator IscR">
    <location>
        <begin position="1"/>
        <end position="155"/>
    </location>
</feature>
<feature type="domain" description="HTH rrf2-type" evidence="3">
    <location>
        <begin position="2"/>
        <end position="136"/>
    </location>
</feature>
<feature type="DNA-binding region" description="H-T-H motif" evidence="3">
    <location>
        <begin position="30"/>
        <end position="53"/>
    </location>
</feature>
<feature type="region of interest" description="Heme regulatory motif (HRM)" evidence="5">
    <location>
        <begin position="141"/>
        <end position="145"/>
    </location>
</feature>
<feature type="binding site" evidence="4">
    <location>
        <position position="142"/>
    </location>
    <ligand>
        <name>[2Fe-2S] cluster</name>
        <dbReference type="ChEBI" id="CHEBI:190135"/>
    </ligand>
</feature>
<feature type="mutagenesis site" description="No impact on binding of Fe-S cluster. No impact on binding of Fe-S cluster; when associated with Ala-121 and Ala-127." evidence="4">
    <original>H</original>
    <variation>A</variation>
    <location>
        <position position="93"/>
    </location>
</feature>
<feature type="mutagenesis site" description="No impact on binding of Fe-S cluster. No impact on binding of Fe-S cluster; when associated with Ala-93 and Ala-127." evidence="4">
    <original>H</original>
    <variation>A</variation>
    <location>
        <position position="121"/>
    </location>
</feature>
<feature type="mutagenesis site" description="No impact on binding of Fe-S cluster. No impact on binding of Fe-S cluster; when associated with Ala-93 and Ala-121." evidence="4">
    <original>H</original>
    <variation>A</variation>
    <location>
        <position position="127"/>
    </location>
</feature>
<feature type="mutagenesis site" description="Impaired binding of Fe-S cluster." evidence="4">
    <original>C</original>
    <variation>A</variation>
    <location>
        <position position="142"/>
    </location>
</feature>
<feature type="mutagenesis site" description="No impact on binding of Fe-S cluster." evidence="4">
    <original>P</original>
    <variation>A</variation>
    <location>
        <position position="143"/>
    </location>
</feature>
<sequence length="155" mass="16821">MKLSTKGRYAMVALVDLALAQKSGNELVSLAEVSKRQDISLPYLEQLFVKLRRAGLVEAVRGPGGGYKLARPAESIRVSEIMEAVEETVNAMHTGAGASGGVSGSRAQSLTNRLWEGLSAHVYVFLHQTRLSDIIKNEMRPCPAVPALFRVVDED</sequence>
<reference evidence="8" key="1">
    <citation type="submission" date="2005-09" db="EMBL/GenBank/DDBJ databases">
        <title>Complete sequence of chromosome 1 of Rhodobacter sphaeroides 2.4.1.</title>
        <authorList>
            <person name="Copeland A."/>
            <person name="Lucas S."/>
            <person name="Lapidus A."/>
            <person name="Barry K."/>
            <person name="Detter J.C."/>
            <person name="Glavina T."/>
            <person name="Hammon N."/>
            <person name="Israni S."/>
            <person name="Pitluck S."/>
            <person name="Richardson P."/>
            <person name="Mackenzie C."/>
            <person name="Choudhary M."/>
            <person name="Larimer F."/>
            <person name="Hauser L.J."/>
            <person name="Land M."/>
            <person name="Donohue T.J."/>
            <person name="Kaplan S."/>
        </authorList>
    </citation>
    <scope>NUCLEOTIDE SEQUENCE [LARGE SCALE GENOMIC DNA]</scope>
    <source>
        <strain evidence="8">ATCC 17023 / DSM 158 / JCM 6121 / CCUG 31486 / LMG 2827 / NBRC 12203 / NCIMB 8253 / ATH 2.4.1.</strain>
    </source>
</reference>
<reference evidence="6" key="2">
    <citation type="journal article" date="2015" name="MicrobiologyOpen">
        <title>IscR of Rhodobacter sphaeroides functions as repressor of genes for iron-sulfur metabolism and represents a new type of iron-sulfur-binding protein.</title>
        <authorList>
            <person name="Remes B."/>
            <person name="Eisenhardt B.D."/>
            <person name="Srinivasan V."/>
            <person name="Klug G."/>
        </authorList>
    </citation>
    <scope>FUNCTION</scope>
    <scope>DNA-BINDING</scope>
    <scope>COFACTOR</scope>
    <scope>DISRUPTION PHENOTYPE</scope>
    <scope>MUTAGENESIS OF HIS-93; HIS-121; HIS-127; CYS-142 AND PRO-143</scope>
</reference>
<organism evidence="7 8">
    <name type="scientific">Cereibacter sphaeroides (strain ATCC 17023 / DSM 158 / JCM 6121 / CCUG 31486 / LMG 2827 / NBRC 12203 / NCIMB 8253 / ATH 2.4.1.)</name>
    <name type="common">Rhodobacter sphaeroides</name>
    <dbReference type="NCBI Taxonomy" id="272943"/>
    <lineage>
        <taxon>Bacteria</taxon>
        <taxon>Pseudomonadati</taxon>
        <taxon>Pseudomonadota</taxon>
        <taxon>Alphaproteobacteria</taxon>
        <taxon>Rhodobacterales</taxon>
        <taxon>Paracoccaceae</taxon>
        <taxon>Cereibacter</taxon>
    </lineage>
</organism>
<evidence type="ECO:0000250" key="1">
    <source>
        <dbReference type="UniProtKB" id="B5XNJ6"/>
    </source>
</evidence>
<evidence type="ECO:0000250" key="2">
    <source>
        <dbReference type="UniProtKB" id="P0AGK8"/>
    </source>
</evidence>
<evidence type="ECO:0000255" key="3">
    <source>
        <dbReference type="PROSITE-ProRule" id="PRU00540"/>
    </source>
</evidence>
<evidence type="ECO:0000269" key="4">
    <source>
    </source>
</evidence>
<evidence type="ECO:0000303" key="5">
    <source>
    </source>
</evidence>
<evidence type="ECO:0000305" key="6"/>
<evidence type="ECO:0000312" key="7">
    <source>
        <dbReference type="EMBL" id="ABA79615.1"/>
    </source>
</evidence>
<evidence type="ECO:0000312" key="8">
    <source>
        <dbReference type="Proteomes" id="UP000002703"/>
    </source>
</evidence>
<protein>
    <recommendedName>
        <fullName evidence="6">HTH-type transcriptional regulator IscR</fullName>
    </recommendedName>
</protein>
<proteinExistence type="evidence at protein level"/>
<dbReference type="EMBL" id="CP000143">
    <property type="protein sequence ID" value="ABA79615.1"/>
    <property type="molecule type" value="Genomic_DNA"/>
</dbReference>
<dbReference type="RefSeq" id="WP_002720606.1">
    <property type="nucleotide sequence ID" value="NZ_CP030271.1"/>
</dbReference>
<dbReference type="RefSeq" id="YP_353516.1">
    <property type="nucleotide sequence ID" value="NC_007493.2"/>
</dbReference>
<dbReference type="SMR" id="Q3J0R9"/>
<dbReference type="STRING" id="272943.RSP_0443"/>
<dbReference type="EnsemblBacteria" id="ABA79615">
    <property type="protein sequence ID" value="ABA79615"/>
    <property type="gene ID" value="RSP_0443"/>
</dbReference>
<dbReference type="GeneID" id="3718816"/>
<dbReference type="KEGG" id="rsp:RSP_0443"/>
<dbReference type="PATRIC" id="fig|272943.9.peg.2392"/>
<dbReference type="eggNOG" id="COG1959">
    <property type="taxonomic scope" value="Bacteria"/>
</dbReference>
<dbReference type="OrthoDB" id="9808360at2"/>
<dbReference type="PhylomeDB" id="Q3J0R9"/>
<dbReference type="Proteomes" id="UP000002703">
    <property type="component" value="Chromosome 1"/>
</dbReference>
<dbReference type="GO" id="GO:0005829">
    <property type="term" value="C:cytosol"/>
    <property type="evidence" value="ECO:0007669"/>
    <property type="project" value="TreeGrafter"/>
</dbReference>
<dbReference type="GO" id="GO:0051537">
    <property type="term" value="F:2 iron, 2 sulfur cluster binding"/>
    <property type="evidence" value="ECO:0007669"/>
    <property type="project" value="UniProtKB-KW"/>
</dbReference>
<dbReference type="GO" id="GO:0003677">
    <property type="term" value="F:DNA binding"/>
    <property type="evidence" value="ECO:0007669"/>
    <property type="project" value="UniProtKB-KW"/>
</dbReference>
<dbReference type="GO" id="GO:0003700">
    <property type="term" value="F:DNA-binding transcription factor activity"/>
    <property type="evidence" value="ECO:0007669"/>
    <property type="project" value="TreeGrafter"/>
</dbReference>
<dbReference type="GO" id="GO:0046872">
    <property type="term" value="F:metal ion binding"/>
    <property type="evidence" value="ECO:0007669"/>
    <property type="project" value="UniProtKB-KW"/>
</dbReference>
<dbReference type="Gene3D" id="1.10.10.10">
    <property type="entry name" value="Winged helix-like DNA-binding domain superfamily/Winged helix DNA-binding domain"/>
    <property type="match status" value="1"/>
</dbReference>
<dbReference type="InterPro" id="IPR030489">
    <property type="entry name" value="TR_Rrf2-type_CS"/>
</dbReference>
<dbReference type="InterPro" id="IPR000944">
    <property type="entry name" value="Tscrpt_reg_Rrf2"/>
</dbReference>
<dbReference type="InterPro" id="IPR036388">
    <property type="entry name" value="WH-like_DNA-bd_sf"/>
</dbReference>
<dbReference type="InterPro" id="IPR036390">
    <property type="entry name" value="WH_DNA-bd_sf"/>
</dbReference>
<dbReference type="NCBIfam" id="TIGR00738">
    <property type="entry name" value="rrf2_super"/>
    <property type="match status" value="1"/>
</dbReference>
<dbReference type="PANTHER" id="PTHR33221:SF5">
    <property type="entry name" value="HTH-TYPE TRANSCRIPTIONAL REGULATOR ISCR"/>
    <property type="match status" value="1"/>
</dbReference>
<dbReference type="PANTHER" id="PTHR33221">
    <property type="entry name" value="WINGED HELIX-TURN-HELIX TRANSCRIPTIONAL REGULATOR, RRF2 FAMILY"/>
    <property type="match status" value="1"/>
</dbReference>
<dbReference type="Pfam" id="PF02082">
    <property type="entry name" value="Rrf2"/>
    <property type="match status" value="1"/>
</dbReference>
<dbReference type="SUPFAM" id="SSF46785">
    <property type="entry name" value="Winged helix' DNA-binding domain"/>
    <property type="match status" value="1"/>
</dbReference>
<dbReference type="PROSITE" id="PS01332">
    <property type="entry name" value="HTH_RRF2_1"/>
    <property type="match status" value="1"/>
</dbReference>
<dbReference type="PROSITE" id="PS51197">
    <property type="entry name" value="HTH_RRF2_2"/>
    <property type="match status" value="1"/>
</dbReference>